<accession>A1WAS7</accession>
<name>LEUC_ACISJ</name>
<feature type="chain" id="PRO_1000063518" description="3-isopropylmalate dehydratase large subunit">
    <location>
        <begin position="1"/>
        <end position="473"/>
    </location>
</feature>
<feature type="binding site" evidence="1">
    <location>
        <position position="351"/>
    </location>
    <ligand>
        <name>[4Fe-4S] cluster</name>
        <dbReference type="ChEBI" id="CHEBI:49883"/>
    </ligand>
</feature>
<feature type="binding site" evidence="1">
    <location>
        <position position="414"/>
    </location>
    <ligand>
        <name>[4Fe-4S] cluster</name>
        <dbReference type="ChEBI" id="CHEBI:49883"/>
    </ligand>
</feature>
<feature type="binding site" evidence="1">
    <location>
        <position position="417"/>
    </location>
    <ligand>
        <name>[4Fe-4S] cluster</name>
        <dbReference type="ChEBI" id="CHEBI:49883"/>
    </ligand>
</feature>
<organism>
    <name type="scientific">Acidovorax sp. (strain JS42)</name>
    <dbReference type="NCBI Taxonomy" id="232721"/>
    <lineage>
        <taxon>Bacteria</taxon>
        <taxon>Pseudomonadati</taxon>
        <taxon>Pseudomonadota</taxon>
        <taxon>Betaproteobacteria</taxon>
        <taxon>Burkholderiales</taxon>
        <taxon>Comamonadaceae</taxon>
        <taxon>Acidovorax</taxon>
    </lineage>
</organism>
<keyword id="KW-0004">4Fe-4S</keyword>
<keyword id="KW-0028">Amino-acid biosynthesis</keyword>
<keyword id="KW-0100">Branched-chain amino acid biosynthesis</keyword>
<keyword id="KW-0408">Iron</keyword>
<keyword id="KW-0411">Iron-sulfur</keyword>
<keyword id="KW-0432">Leucine biosynthesis</keyword>
<keyword id="KW-0456">Lyase</keyword>
<keyword id="KW-0479">Metal-binding</keyword>
<sequence>MGRTLYDKIFDEHVVHTEEDGTAVLYIDRHLVHEVTSPQAFEGLREAGRKVWRVSSIVATADHNTPTTGWERGYDGIADPISKEQIVTLDKNIQESGAAAFFPFLSKRQGIVHVIGPENGATLPGMTVVCGDSHTSTHGAFGALAHGIGTSEVEHVMATQTLLAKKAKNMLVKVNGKVAPGITAKDIVLAIIGKIGTAGGTGYTIEFAGEAIRDLSMEGRMTVCNMAIEAGARAGLVAVDDKTINYVKGRPLAPTGVEWDQAVAYWKTLHSDADAKFDAVVELNAAEIVPQVTWGTSPEMVLGIDAVVPDPDKEKDPSKRGAIERALTYMGLQPGKPMDDIFVDKVFIGSCTNSRIEDMREAAAVVKKLGQKVAKNIKLAMVVPGSGLVKEQAEREGLDAIFKAAGFEWREPGCSMCLAMNADRLEPGERCASTSNRNFEGRQGAGGRTHLVSPAMAAAAAIHGHFVDIRQFA</sequence>
<dbReference type="EC" id="4.2.1.33" evidence="1"/>
<dbReference type="EMBL" id="CP000539">
    <property type="protein sequence ID" value="ABM43352.1"/>
    <property type="molecule type" value="Genomic_DNA"/>
</dbReference>
<dbReference type="SMR" id="A1WAS7"/>
<dbReference type="STRING" id="232721.Ajs_3229"/>
<dbReference type="KEGG" id="ajs:Ajs_3229"/>
<dbReference type="eggNOG" id="COG0065">
    <property type="taxonomic scope" value="Bacteria"/>
</dbReference>
<dbReference type="HOGENOM" id="CLU_006714_3_4_4"/>
<dbReference type="UniPathway" id="UPA00048">
    <property type="reaction ID" value="UER00071"/>
</dbReference>
<dbReference type="Proteomes" id="UP000000645">
    <property type="component" value="Chromosome"/>
</dbReference>
<dbReference type="GO" id="GO:0003861">
    <property type="term" value="F:3-isopropylmalate dehydratase activity"/>
    <property type="evidence" value="ECO:0007669"/>
    <property type="project" value="UniProtKB-UniRule"/>
</dbReference>
<dbReference type="GO" id="GO:0051539">
    <property type="term" value="F:4 iron, 4 sulfur cluster binding"/>
    <property type="evidence" value="ECO:0007669"/>
    <property type="project" value="UniProtKB-KW"/>
</dbReference>
<dbReference type="GO" id="GO:0046872">
    <property type="term" value="F:metal ion binding"/>
    <property type="evidence" value="ECO:0007669"/>
    <property type="project" value="UniProtKB-KW"/>
</dbReference>
<dbReference type="GO" id="GO:0009098">
    <property type="term" value="P:L-leucine biosynthetic process"/>
    <property type="evidence" value="ECO:0007669"/>
    <property type="project" value="UniProtKB-UniRule"/>
</dbReference>
<dbReference type="CDD" id="cd01583">
    <property type="entry name" value="IPMI"/>
    <property type="match status" value="1"/>
</dbReference>
<dbReference type="FunFam" id="3.30.499.10:FF:000007">
    <property type="entry name" value="3-isopropylmalate dehydratase large subunit"/>
    <property type="match status" value="1"/>
</dbReference>
<dbReference type="Gene3D" id="3.30.499.10">
    <property type="entry name" value="Aconitase, domain 3"/>
    <property type="match status" value="2"/>
</dbReference>
<dbReference type="HAMAP" id="MF_01026">
    <property type="entry name" value="LeuC_type1"/>
    <property type="match status" value="1"/>
</dbReference>
<dbReference type="InterPro" id="IPR004430">
    <property type="entry name" value="3-IsopropMal_deHydase_lsu"/>
</dbReference>
<dbReference type="InterPro" id="IPR015931">
    <property type="entry name" value="Acnase/IPM_dHydase_lsu_aba_1/3"/>
</dbReference>
<dbReference type="InterPro" id="IPR001030">
    <property type="entry name" value="Acoase/IPM_deHydtase_lsu_aba"/>
</dbReference>
<dbReference type="InterPro" id="IPR018136">
    <property type="entry name" value="Aconitase_4Fe-4S_BS"/>
</dbReference>
<dbReference type="InterPro" id="IPR036008">
    <property type="entry name" value="Aconitase_4Fe-4S_dom"/>
</dbReference>
<dbReference type="InterPro" id="IPR050067">
    <property type="entry name" value="IPM_dehydratase_rel_enz"/>
</dbReference>
<dbReference type="InterPro" id="IPR033941">
    <property type="entry name" value="IPMI_cat"/>
</dbReference>
<dbReference type="NCBIfam" id="TIGR00170">
    <property type="entry name" value="leuC"/>
    <property type="match status" value="1"/>
</dbReference>
<dbReference type="NCBIfam" id="NF004016">
    <property type="entry name" value="PRK05478.1"/>
    <property type="match status" value="1"/>
</dbReference>
<dbReference type="NCBIfam" id="NF009116">
    <property type="entry name" value="PRK12466.1"/>
    <property type="match status" value="1"/>
</dbReference>
<dbReference type="PANTHER" id="PTHR43822:SF9">
    <property type="entry name" value="3-ISOPROPYLMALATE DEHYDRATASE"/>
    <property type="match status" value="1"/>
</dbReference>
<dbReference type="PANTHER" id="PTHR43822">
    <property type="entry name" value="HOMOACONITASE, MITOCHONDRIAL-RELATED"/>
    <property type="match status" value="1"/>
</dbReference>
<dbReference type="Pfam" id="PF00330">
    <property type="entry name" value="Aconitase"/>
    <property type="match status" value="1"/>
</dbReference>
<dbReference type="PRINTS" id="PR00415">
    <property type="entry name" value="ACONITASE"/>
</dbReference>
<dbReference type="SUPFAM" id="SSF53732">
    <property type="entry name" value="Aconitase iron-sulfur domain"/>
    <property type="match status" value="1"/>
</dbReference>
<dbReference type="PROSITE" id="PS00450">
    <property type="entry name" value="ACONITASE_1"/>
    <property type="match status" value="1"/>
</dbReference>
<dbReference type="PROSITE" id="PS01244">
    <property type="entry name" value="ACONITASE_2"/>
    <property type="match status" value="1"/>
</dbReference>
<gene>
    <name evidence="1" type="primary">leuC</name>
    <name type="ordered locus">Ajs_3229</name>
</gene>
<protein>
    <recommendedName>
        <fullName evidence="1">3-isopropylmalate dehydratase large subunit</fullName>
        <ecNumber evidence="1">4.2.1.33</ecNumber>
    </recommendedName>
    <alternativeName>
        <fullName evidence="1">Alpha-IPM isomerase</fullName>
        <shortName evidence="1">IPMI</shortName>
    </alternativeName>
    <alternativeName>
        <fullName evidence="1">Isopropylmalate isomerase</fullName>
    </alternativeName>
</protein>
<comment type="function">
    <text evidence="1">Catalyzes the isomerization between 2-isopropylmalate and 3-isopropylmalate, via the formation of 2-isopropylmaleate.</text>
</comment>
<comment type="catalytic activity">
    <reaction evidence="1">
        <text>(2R,3S)-3-isopropylmalate = (2S)-2-isopropylmalate</text>
        <dbReference type="Rhea" id="RHEA:32287"/>
        <dbReference type="ChEBI" id="CHEBI:1178"/>
        <dbReference type="ChEBI" id="CHEBI:35121"/>
        <dbReference type="EC" id="4.2.1.33"/>
    </reaction>
</comment>
<comment type="cofactor">
    <cofactor evidence="1">
        <name>[4Fe-4S] cluster</name>
        <dbReference type="ChEBI" id="CHEBI:49883"/>
    </cofactor>
    <text evidence="1">Binds 1 [4Fe-4S] cluster per subunit.</text>
</comment>
<comment type="pathway">
    <text evidence="1">Amino-acid biosynthesis; L-leucine biosynthesis; L-leucine from 3-methyl-2-oxobutanoate: step 2/4.</text>
</comment>
<comment type="subunit">
    <text evidence="1">Heterodimer of LeuC and LeuD.</text>
</comment>
<comment type="similarity">
    <text evidence="1">Belongs to the aconitase/IPM isomerase family. LeuC type 1 subfamily.</text>
</comment>
<evidence type="ECO:0000255" key="1">
    <source>
        <dbReference type="HAMAP-Rule" id="MF_01026"/>
    </source>
</evidence>
<proteinExistence type="inferred from homology"/>
<reference key="1">
    <citation type="submission" date="2006-12" db="EMBL/GenBank/DDBJ databases">
        <title>Complete sequence of chromosome 1 of Acidovorax sp. JS42.</title>
        <authorList>
            <person name="Copeland A."/>
            <person name="Lucas S."/>
            <person name="Lapidus A."/>
            <person name="Barry K."/>
            <person name="Detter J.C."/>
            <person name="Glavina del Rio T."/>
            <person name="Dalin E."/>
            <person name="Tice H."/>
            <person name="Pitluck S."/>
            <person name="Chertkov O."/>
            <person name="Brettin T."/>
            <person name="Bruce D."/>
            <person name="Han C."/>
            <person name="Tapia R."/>
            <person name="Gilna P."/>
            <person name="Schmutz J."/>
            <person name="Larimer F."/>
            <person name="Land M."/>
            <person name="Hauser L."/>
            <person name="Kyrpides N."/>
            <person name="Kim E."/>
            <person name="Stahl D."/>
            <person name="Richardson P."/>
        </authorList>
    </citation>
    <scope>NUCLEOTIDE SEQUENCE [LARGE SCALE GENOMIC DNA]</scope>
    <source>
        <strain>JS42</strain>
    </source>
</reference>